<gene>
    <name evidence="2" type="primary">argF</name>
    <name type="ordered locus">aq_1711</name>
</gene>
<dbReference type="EC" id="2.1.3.3" evidence="2"/>
<dbReference type="EMBL" id="AE000657">
    <property type="protein sequence ID" value="AAC07566.1"/>
    <property type="molecule type" value="Genomic_DNA"/>
</dbReference>
<dbReference type="PIR" id="E70447">
    <property type="entry name" value="E70447"/>
</dbReference>
<dbReference type="RefSeq" id="NP_214173.1">
    <property type="nucleotide sequence ID" value="NC_000918.1"/>
</dbReference>
<dbReference type="RefSeq" id="WP_010881110.1">
    <property type="nucleotide sequence ID" value="NC_000918.1"/>
</dbReference>
<dbReference type="SMR" id="O67607"/>
<dbReference type="FunCoup" id="O67607">
    <property type="interactions" value="372"/>
</dbReference>
<dbReference type="STRING" id="224324.aq_1711"/>
<dbReference type="EnsemblBacteria" id="AAC07566">
    <property type="protein sequence ID" value="AAC07566"/>
    <property type="gene ID" value="aq_1711"/>
</dbReference>
<dbReference type="KEGG" id="aae:aq_1711"/>
<dbReference type="PATRIC" id="fig|224324.8.peg.1314"/>
<dbReference type="eggNOG" id="COG0078">
    <property type="taxonomic scope" value="Bacteria"/>
</dbReference>
<dbReference type="HOGENOM" id="CLU_043846_3_2_0"/>
<dbReference type="InParanoid" id="O67607"/>
<dbReference type="OrthoDB" id="9802587at2"/>
<dbReference type="UniPathway" id="UPA00068">
    <property type="reaction ID" value="UER00112"/>
</dbReference>
<dbReference type="Proteomes" id="UP000000798">
    <property type="component" value="Chromosome"/>
</dbReference>
<dbReference type="GO" id="GO:0005737">
    <property type="term" value="C:cytoplasm"/>
    <property type="evidence" value="ECO:0007669"/>
    <property type="project" value="UniProtKB-SubCell"/>
</dbReference>
<dbReference type="GO" id="GO:0016597">
    <property type="term" value="F:amino acid binding"/>
    <property type="evidence" value="ECO:0007669"/>
    <property type="project" value="InterPro"/>
</dbReference>
<dbReference type="GO" id="GO:0004585">
    <property type="term" value="F:ornithine carbamoyltransferase activity"/>
    <property type="evidence" value="ECO:0000318"/>
    <property type="project" value="GO_Central"/>
</dbReference>
<dbReference type="GO" id="GO:0042450">
    <property type="term" value="P:arginine biosynthetic process via ornithine"/>
    <property type="evidence" value="ECO:0000318"/>
    <property type="project" value="GO_Central"/>
</dbReference>
<dbReference type="GO" id="GO:0019240">
    <property type="term" value="P:citrulline biosynthetic process"/>
    <property type="evidence" value="ECO:0000318"/>
    <property type="project" value="GO_Central"/>
</dbReference>
<dbReference type="GO" id="GO:0006526">
    <property type="term" value="P:L-arginine biosynthetic process"/>
    <property type="evidence" value="ECO:0007669"/>
    <property type="project" value="UniProtKB-UniRule"/>
</dbReference>
<dbReference type="FunFam" id="3.40.50.1370:FF:000008">
    <property type="entry name" value="Ornithine carbamoyltransferase"/>
    <property type="match status" value="1"/>
</dbReference>
<dbReference type="Gene3D" id="3.40.50.1370">
    <property type="entry name" value="Aspartate/ornithine carbamoyltransferase"/>
    <property type="match status" value="2"/>
</dbReference>
<dbReference type="HAMAP" id="MF_01109">
    <property type="entry name" value="OTCase"/>
    <property type="match status" value="1"/>
</dbReference>
<dbReference type="InterPro" id="IPR006132">
    <property type="entry name" value="Asp/Orn_carbamoyltranf_P-bd"/>
</dbReference>
<dbReference type="InterPro" id="IPR006130">
    <property type="entry name" value="Asp/Orn_carbamoylTrfase"/>
</dbReference>
<dbReference type="InterPro" id="IPR036901">
    <property type="entry name" value="Asp/Orn_carbamoylTrfase_sf"/>
</dbReference>
<dbReference type="InterPro" id="IPR006131">
    <property type="entry name" value="Asp_carbamoyltransf_Asp/Orn-bd"/>
</dbReference>
<dbReference type="InterPro" id="IPR002292">
    <property type="entry name" value="Orn/put_carbamltrans"/>
</dbReference>
<dbReference type="InterPro" id="IPR024904">
    <property type="entry name" value="OTCase_ArgI"/>
</dbReference>
<dbReference type="NCBIfam" id="TIGR00658">
    <property type="entry name" value="orni_carb_tr"/>
    <property type="match status" value="1"/>
</dbReference>
<dbReference type="NCBIfam" id="NF001986">
    <property type="entry name" value="PRK00779.1"/>
    <property type="match status" value="1"/>
</dbReference>
<dbReference type="PANTHER" id="PTHR45753">
    <property type="entry name" value="ORNITHINE CARBAMOYLTRANSFERASE, MITOCHONDRIAL"/>
    <property type="match status" value="1"/>
</dbReference>
<dbReference type="PANTHER" id="PTHR45753:SF3">
    <property type="entry name" value="ORNITHINE TRANSCARBAMYLASE, MITOCHONDRIAL"/>
    <property type="match status" value="1"/>
</dbReference>
<dbReference type="Pfam" id="PF00185">
    <property type="entry name" value="OTCace"/>
    <property type="match status" value="1"/>
</dbReference>
<dbReference type="Pfam" id="PF02729">
    <property type="entry name" value="OTCace_N"/>
    <property type="match status" value="1"/>
</dbReference>
<dbReference type="PRINTS" id="PR00100">
    <property type="entry name" value="AOTCASE"/>
</dbReference>
<dbReference type="PRINTS" id="PR00102">
    <property type="entry name" value="OTCASE"/>
</dbReference>
<dbReference type="SUPFAM" id="SSF53671">
    <property type="entry name" value="Aspartate/ornithine carbamoyltransferase"/>
    <property type="match status" value="1"/>
</dbReference>
<dbReference type="PROSITE" id="PS00097">
    <property type="entry name" value="CARBAMOYLTRANSFERASE"/>
    <property type="match status" value="1"/>
</dbReference>
<accession>O67607</accession>
<organism>
    <name type="scientific">Aquifex aeolicus (strain VF5)</name>
    <dbReference type="NCBI Taxonomy" id="224324"/>
    <lineage>
        <taxon>Bacteria</taxon>
        <taxon>Pseudomonadati</taxon>
        <taxon>Aquificota</taxon>
        <taxon>Aquificia</taxon>
        <taxon>Aquificales</taxon>
        <taxon>Aquificaceae</taxon>
        <taxon>Aquifex</taxon>
    </lineage>
</organism>
<keyword id="KW-0028">Amino-acid biosynthesis</keyword>
<keyword id="KW-0055">Arginine biosynthesis</keyword>
<keyword id="KW-0963">Cytoplasm</keyword>
<keyword id="KW-1185">Reference proteome</keyword>
<keyword id="KW-0808">Transferase</keyword>
<sequence>MKRDFVDLWDLSPKEAWEIVKKTLKVKKGEEELGKPLSGKTIALLFTKPSTRTRVSFEVGIYQLGGNSLFFQEKELQVSRGEDVRDTARTLSKYVDGVIVRNHSHTWLKEFANFASVPVINALTNMSHPCQILSDVFTLYEHYGEELKNLKVAYVGDGNNVCNTLMVGAGMFGLKLFVATPEGYEPNSYYYKKALEFSKENGGSVELTNNPVESVKDADVVYTDVWVSMGEENKNIEAFLPYQVNEKLLSFAKSSVKVMHCLPAKKGQEITEEVFEKNADFIFTQAENRLHTQKTLMEFLFREPQA</sequence>
<reference key="1">
    <citation type="journal article" date="1998" name="Nature">
        <title>The complete genome of the hyperthermophilic bacterium Aquifex aeolicus.</title>
        <authorList>
            <person name="Deckert G."/>
            <person name="Warren P.V."/>
            <person name="Gaasterland T."/>
            <person name="Young W.G."/>
            <person name="Lenox A.L."/>
            <person name="Graham D.E."/>
            <person name="Overbeek R."/>
            <person name="Snead M.A."/>
            <person name="Keller M."/>
            <person name="Aujay M."/>
            <person name="Huber R."/>
            <person name="Feldman R.A."/>
            <person name="Short J.M."/>
            <person name="Olsen G.J."/>
            <person name="Swanson R.V."/>
        </authorList>
    </citation>
    <scope>NUCLEOTIDE SEQUENCE [LARGE SCALE GENOMIC DNA]</scope>
    <source>
        <strain>VF5</strain>
    </source>
</reference>
<protein>
    <recommendedName>
        <fullName evidence="2">Ornithine carbamoyltransferase</fullName>
        <shortName evidence="2">OTCase</shortName>
        <ecNumber evidence="2">2.1.3.3</ecNumber>
    </recommendedName>
</protein>
<evidence type="ECO:0000250" key="1"/>
<evidence type="ECO:0000255" key="2">
    <source>
        <dbReference type="HAMAP-Rule" id="MF_01109"/>
    </source>
</evidence>
<proteinExistence type="inferred from homology"/>
<comment type="function">
    <text evidence="1">Reversibly catalyzes the transfer of the carbamoyl group from carbamoyl phosphate (CP) to the N(epsilon) atom of ornithine (ORN) to produce L-citrulline.</text>
</comment>
<comment type="catalytic activity">
    <reaction evidence="2">
        <text>carbamoyl phosphate + L-ornithine = L-citrulline + phosphate + H(+)</text>
        <dbReference type="Rhea" id="RHEA:19513"/>
        <dbReference type="ChEBI" id="CHEBI:15378"/>
        <dbReference type="ChEBI" id="CHEBI:43474"/>
        <dbReference type="ChEBI" id="CHEBI:46911"/>
        <dbReference type="ChEBI" id="CHEBI:57743"/>
        <dbReference type="ChEBI" id="CHEBI:58228"/>
        <dbReference type="EC" id="2.1.3.3"/>
    </reaction>
</comment>
<comment type="pathway">
    <text evidence="2">Amino-acid biosynthesis; L-arginine biosynthesis; L-arginine from L-ornithine and carbamoyl phosphate: step 1/3.</text>
</comment>
<comment type="subcellular location">
    <subcellularLocation>
        <location evidence="2">Cytoplasm</location>
    </subcellularLocation>
</comment>
<comment type="similarity">
    <text evidence="2">Belongs to the aspartate/ornithine carbamoyltransferase superfamily. OTCase family.</text>
</comment>
<feature type="chain" id="PRO_0000112874" description="Ornithine carbamoyltransferase">
    <location>
        <begin position="1"/>
        <end position="306"/>
    </location>
</feature>
<feature type="binding site" evidence="2">
    <location>
        <begin position="50"/>
        <end position="53"/>
    </location>
    <ligand>
        <name>carbamoyl phosphate</name>
        <dbReference type="ChEBI" id="CHEBI:58228"/>
    </ligand>
</feature>
<feature type="binding site" evidence="2">
    <location>
        <position position="77"/>
    </location>
    <ligand>
        <name>carbamoyl phosphate</name>
        <dbReference type="ChEBI" id="CHEBI:58228"/>
    </ligand>
</feature>
<feature type="binding site" evidence="2">
    <location>
        <position position="101"/>
    </location>
    <ligand>
        <name>carbamoyl phosphate</name>
        <dbReference type="ChEBI" id="CHEBI:58228"/>
    </ligand>
</feature>
<feature type="binding site" evidence="2">
    <location>
        <begin position="128"/>
        <end position="131"/>
    </location>
    <ligand>
        <name>carbamoyl phosphate</name>
        <dbReference type="ChEBI" id="CHEBI:58228"/>
    </ligand>
</feature>
<feature type="binding site" evidence="2">
    <location>
        <position position="160"/>
    </location>
    <ligand>
        <name>L-ornithine</name>
        <dbReference type="ChEBI" id="CHEBI:46911"/>
    </ligand>
</feature>
<feature type="binding site" evidence="2">
    <location>
        <position position="224"/>
    </location>
    <ligand>
        <name>L-ornithine</name>
        <dbReference type="ChEBI" id="CHEBI:46911"/>
    </ligand>
</feature>
<feature type="binding site" evidence="2">
    <location>
        <begin position="228"/>
        <end position="229"/>
    </location>
    <ligand>
        <name>L-ornithine</name>
        <dbReference type="ChEBI" id="CHEBI:46911"/>
    </ligand>
</feature>
<feature type="binding site" evidence="2">
    <location>
        <begin position="261"/>
        <end position="262"/>
    </location>
    <ligand>
        <name>carbamoyl phosphate</name>
        <dbReference type="ChEBI" id="CHEBI:58228"/>
    </ligand>
</feature>
<feature type="binding site" evidence="2">
    <location>
        <position position="289"/>
    </location>
    <ligand>
        <name>carbamoyl phosphate</name>
        <dbReference type="ChEBI" id="CHEBI:58228"/>
    </ligand>
</feature>
<name>OTC_AQUAE</name>